<proteinExistence type="inferred from homology"/>
<keyword id="KW-0150">Chloroplast</keyword>
<keyword id="KW-0472">Membrane</keyword>
<keyword id="KW-0520">NAD</keyword>
<keyword id="KW-0521">NADP</keyword>
<keyword id="KW-0934">Plastid</keyword>
<keyword id="KW-0618">Plastoquinone</keyword>
<keyword id="KW-0874">Quinone</keyword>
<keyword id="KW-0793">Thylakoid</keyword>
<keyword id="KW-1278">Translocase</keyword>
<keyword id="KW-0812">Transmembrane</keyword>
<keyword id="KW-1133">Transmembrane helix</keyword>
<keyword id="KW-0813">Transport</keyword>
<comment type="function">
    <text evidence="1">NDH shuttles electrons from NAD(P)H:plastoquinone, via FMN and iron-sulfur (Fe-S) centers, to quinones in the photosynthetic chain and possibly in a chloroplast respiratory chain. The immediate electron acceptor for the enzyme in this species is believed to be plastoquinone. Couples the redox reaction to proton translocation, and thus conserves the redox energy in a proton gradient.</text>
</comment>
<comment type="catalytic activity">
    <reaction evidence="1">
        <text>a plastoquinone + NADH + (n+1) H(+)(in) = a plastoquinol + NAD(+) + n H(+)(out)</text>
        <dbReference type="Rhea" id="RHEA:42608"/>
        <dbReference type="Rhea" id="RHEA-COMP:9561"/>
        <dbReference type="Rhea" id="RHEA-COMP:9562"/>
        <dbReference type="ChEBI" id="CHEBI:15378"/>
        <dbReference type="ChEBI" id="CHEBI:17757"/>
        <dbReference type="ChEBI" id="CHEBI:57540"/>
        <dbReference type="ChEBI" id="CHEBI:57945"/>
        <dbReference type="ChEBI" id="CHEBI:62192"/>
    </reaction>
</comment>
<comment type="catalytic activity">
    <reaction evidence="1">
        <text>a plastoquinone + NADPH + (n+1) H(+)(in) = a plastoquinol + NADP(+) + n H(+)(out)</text>
        <dbReference type="Rhea" id="RHEA:42612"/>
        <dbReference type="Rhea" id="RHEA-COMP:9561"/>
        <dbReference type="Rhea" id="RHEA-COMP:9562"/>
        <dbReference type="ChEBI" id="CHEBI:15378"/>
        <dbReference type="ChEBI" id="CHEBI:17757"/>
        <dbReference type="ChEBI" id="CHEBI:57783"/>
        <dbReference type="ChEBI" id="CHEBI:58349"/>
        <dbReference type="ChEBI" id="CHEBI:62192"/>
    </reaction>
</comment>
<comment type="subunit">
    <text evidence="1">NDH is composed of at least 16 different subunits, 5 of which are encoded in the nucleus.</text>
</comment>
<comment type="subcellular location">
    <subcellularLocation>
        <location evidence="1">Plastid</location>
        <location evidence="1">Chloroplast thylakoid membrane</location>
        <topology evidence="1">Multi-pass membrane protein</topology>
    </subcellularLocation>
</comment>
<comment type="similarity">
    <text evidence="1">Belongs to the complex I subunit 3 family.</text>
</comment>
<geneLocation type="chloroplast"/>
<protein>
    <recommendedName>
        <fullName evidence="1">NAD(P)H-quinone oxidoreductase subunit 3, chloroplastic</fullName>
        <ecNumber evidence="1">7.1.1.-</ecNumber>
    </recommendedName>
    <alternativeName>
        <fullName evidence="1">NAD(P)H dehydrogenase subunit 3</fullName>
    </alternativeName>
    <alternativeName>
        <fullName evidence="1">NADH-plastoquinone oxidoreductase subunit 3</fullName>
    </alternativeName>
</protein>
<accession>B0Z5B4</accession>
<organism>
    <name type="scientific">Oenothera parviflora</name>
    <name type="common">Small-flowered evening primrose</name>
    <name type="synonym">Oenothera cruciata</name>
    <dbReference type="NCBI Taxonomy" id="482429"/>
    <lineage>
        <taxon>Eukaryota</taxon>
        <taxon>Viridiplantae</taxon>
        <taxon>Streptophyta</taxon>
        <taxon>Embryophyta</taxon>
        <taxon>Tracheophyta</taxon>
        <taxon>Spermatophyta</taxon>
        <taxon>Magnoliopsida</taxon>
        <taxon>eudicotyledons</taxon>
        <taxon>Gunneridae</taxon>
        <taxon>Pentapetalae</taxon>
        <taxon>rosids</taxon>
        <taxon>malvids</taxon>
        <taxon>Myrtales</taxon>
        <taxon>Onagraceae</taxon>
        <taxon>Onagroideae</taxon>
        <taxon>Onagreae</taxon>
        <taxon>Oenothera</taxon>
    </lineage>
</organism>
<name>NU3C_OENPA</name>
<reference key="1">
    <citation type="journal article" date="2008" name="Nucleic Acids Res.">
        <title>The complete nucleotide sequences of the five genetically distinct plastid genomes of Oenothera, subsection Oenothera: I. Sequence evaluation and plastome evolution.</title>
        <authorList>
            <person name="Greiner S."/>
            <person name="Wang X."/>
            <person name="Rauwolf U."/>
            <person name="Silber M.V."/>
            <person name="Mayer K."/>
            <person name="Meurer J."/>
            <person name="Haberer G."/>
            <person name="Herrmann R.G."/>
        </authorList>
    </citation>
    <scope>NUCLEOTIDE SEQUENCE [LARGE SCALE GENOMIC DNA]</scope>
    <source>
        <strain>cv. Atrovirens</strain>
    </source>
</reference>
<gene>
    <name evidence="1" type="primary">ndhC</name>
</gene>
<evidence type="ECO:0000255" key="1">
    <source>
        <dbReference type="HAMAP-Rule" id="MF_01394"/>
    </source>
</evidence>
<sequence length="120" mass="13849">MFLLYEYDIFWAFLIISSVIPILAFRISGLLAPTSKGPEKLSSYESGIEPMGDAWLQFRIRYYMFALVFVVFDVETIFLYPWALSFDILGVSVFIEALIFVLILVLGLVYAWRKGALEWS</sequence>
<feature type="chain" id="PRO_0000362860" description="NAD(P)H-quinone oxidoreductase subunit 3, chloroplastic">
    <location>
        <begin position="1"/>
        <end position="120"/>
    </location>
</feature>
<feature type="transmembrane region" description="Helical" evidence="1">
    <location>
        <begin position="2"/>
        <end position="22"/>
    </location>
</feature>
<feature type="transmembrane region" description="Helical" evidence="1">
    <location>
        <begin position="64"/>
        <end position="84"/>
    </location>
</feature>
<feature type="transmembrane region" description="Helical" evidence="1">
    <location>
        <begin position="88"/>
        <end position="108"/>
    </location>
</feature>
<dbReference type="EC" id="7.1.1.-" evidence="1"/>
<dbReference type="EMBL" id="EU262891">
    <property type="protein sequence ID" value="ABX10107.1"/>
    <property type="molecule type" value="Genomic_DNA"/>
</dbReference>
<dbReference type="RefSeq" id="YP_001687437.1">
    <property type="nucleotide sequence ID" value="NC_010362.1"/>
</dbReference>
<dbReference type="SMR" id="B0Z5B4"/>
<dbReference type="GeneID" id="5955423"/>
<dbReference type="GO" id="GO:0009535">
    <property type="term" value="C:chloroplast thylakoid membrane"/>
    <property type="evidence" value="ECO:0007669"/>
    <property type="project" value="UniProtKB-SubCell"/>
</dbReference>
<dbReference type="GO" id="GO:0030964">
    <property type="term" value="C:NADH dehydrogenase complex"/>
    <property type="evidence" value="ECO:0007669"/>
    <property type="project" value="TreeGrafter"/>
</dbReference>
<dbReference type="GO" id="GO:0008137">
    <property type="term" value="F:NADH dehydrogenase (ubiquinone) activity"/>
    <property type="evidence" value="ECO:0007669"/>
    <property type="project" value="InterPro"/>
</dbReference>
<dbReference type="GO" id="GO:0048038">
    <property type="term" value="F:quinone binding"/>
    <property type="evidence" value="ECO:0007669"/>
    <property type="project" value="UniProtKB-KW"/>
</dbReference>
<dbReference type="GO" id="GO:0019684">
    <property type="term" value="P:photosynthesis, light reaction"/>
    <property type="evidence" value="ECO:0007669"/>
    <property type="project" value="UniProtKB-UniRule"/>
</dbReference>
<dbReference type="FunFam" id="1.20.58.1610:FF:000001">
    <property type="entry name" value="NAD(P)H-quinone oxidoreductase subunit 3, chloroplastic"/>
    <property type="match status" value="1"/>
</dbReference>
<dbReference type="Gene3D" id="1.20.58.1610">
    <property type="entry name" value="NADH:ubiquinone/plastoquinone oxidoreductase, chain 3"/>
    <property type="match status" value="1"/>
</dbReference>
<dbReference type="HAMAP" id="MF_01394">
    <property type="entry name" value="NDH1_NuoA"/>
    <property type="match status" value="1"/>
</dbReference>
<dbReference type="InterPro" id="IPR023043">
    <property type="entry name" value="NAD(P)H_OxRDtase_bac/plastid"/>
</dbReference>
<dbReference type="InterPro" id="IPR000440">
    <property type="entry name" value="NADH_UbQ/plastoQ_OxRdtase_su3"/>
</dbReference>
<dbReference type="InterPro" id="IPR038430">
    <property type="entry name" value="NDAH_ubi_oxred_su3_sf"/>
</dbReference>
<dbReference type="PANTHER" id="PTHR11058">
    <property type="entry name" value="NADH-UBIQUINONE OXIDOREDUCTASE CHAIN 3"/>
    <property type="match status" value="1"/>
</dbReference>
<dbReference type="PANTHER" id="PTHR11058:SF9">
    <property type="entry name" value="NADH-UBIQUINONE OXIDOREDUCTASE CHAIN 3"/>
    <property type="match status" value="1"/>
</dbReference>
<dbReference type="Pfam" id="PF00507">
    <property type="entry name" value="Oxidored_q4"/>
    <property type="match status" value="1"/>
</dbReference>